<evidence type="ECO:0000255" key="1">
    <source>
        <dbReference type="HAMAP-Rule" id="MF_01227"/>
    </source>
</evidence>
<keyword id="KW-0067">ATP-binding</keyword>
<keyword id="KW-0315">Glutamine amidotransferase</keyword>
<keyword id="KW-0436">Ligase</keyword>
<keyword id="KW-0460">Magnesium</keyword>
<keyword id="KW-0479">Metal-binding</keyword>
<keyword id="KW-0547">Nucleotide-binding</keyword>
<keyword id="KW-0665">Pyrimidine biosynthesis</keyword>
<reference key="1">
    <citation type="submission" date="2008-02" db="EMBL/GenBank/DDBJ databases">
        <title>Complete sequence of Pseudomonas putida W619.</title>
        <authorList>
            <person name="Copeland A."/>
            <person name="Lucas S."/>
            <person name="Lapidus A."/>
            <person name="Barry K."/>
            <person name="Detter J.C."/>
            <person name="Glavina del Rio T."/>
            <person name="Dalin E."/>
            <person name="Tice H."/>
            <person name="Pitluck S."/>
            <person name="Chain P."/>
            <person name="Malfatti S."/>
            <person name="Shin M."/>
            <person name="Vergez L."/>
            <person name="Schmutz J."/>
            <person name="Larimer F."/>
            <person name="Land M."/>
            <person name="Hauser L."/>
            <person name="Kyrpides N."/>
            <person name="Kim E."/>
            <person name="Taghavi S."/>
            <person name="Vangronsveld D."/>
            <person name="van der Lelie D."/>
            <person name="Richardson P."/>
        </authorList>
    </citation>
    <scope>NUCLEOTIDE SEQUENCE [LARGE SCALE GENOMIC DNA]</scope>
    <source>
        <strain>W619</strain>
    </source>
</reference>
<protein>
    <recommendedName>
        <fullName evidence="1">CTP synthase</fullName>
        <ecNumber evidence="1">6.3.4.2</ecNumber>
    </recommendedName>
    <alternativeName>
        <fullName evidence="1">Cytidine 5'-triphosphate synthase</fullName>
    </alternativeName>
    <alternativeName>
        <fullName evidence="1">Cytidine triphosphate synthetase</fullName>
        <shortName evidence="1">CTP synthetase</shortName>
        <shortName evidence="1">CTPS</shortName>
    </alternativeName>
    <alternativeName>
        <fullName evidence="1">UTP--ammonia ligase</fullName>
    </alternativeName>
</protein>
<comment type="function">
    <text evidence="1">Catalyzes the ATP-dependent amination of UTP to CTP with either L-glutamine or ammonia as the source of nitrogen. Regulates intracellular CTP levels through interactions with the four ribonucleotide triphosphates.</text>
</comment>
<comment type="catalytic activity">
    <reaction evidence="1">
        <text>UTP + L-glutamine + ATP + H2O = CTP + L-glutamate + ADP + phosphate + 2 H(+)</text>
        <dbReference type="Rhea" id="RHEA:26426"/>
        <dbReference type="ChEBI" id="CHEBI:15377"/>
        <dbReference type="ChEBI" id="CHEBI:15378"/>
        <dbReference type="ChEBI" id="CHEBI:29985"/>
        <dbReference type="ChEBI" id="CHEBI:30616"/>
        <dbReference type="ChEBI" id="CHEBI:37563"/>
        <dbReference type="ChEBI" id="CHEBI:43474"/>
        <dbReference type="ChEBI" id="CHEBI:46398"/>
        <dbReference type="ChEBI" id="CHEBI:58359"/>
        <dbReference type="ChEBI" id="CHEBI:456216"/>
        <dbReference type="EC" id="6.3.4.2"/>
    </reaction>
</comment>
<comment type="catalytic activity">
    <reaction evidence="1">
        <text>L-glutamine + H2O = L-glutamate + NH4(+)</text>
        <dbReference type="Rhea" id="RHEA:15889"/>
        <dbReference type="ChEBI" id="CHEBI:15377"/>
        <dbReference type="ChEBI" id="CHEBI:28938"/>
        <dbReference type="ChEBI" id="CHEBI:29985"/>
        <dbReference type="ChEBI" id="CHEBI:58359"/>
    </reaction>
</comment>
<comment type="catalytic activity">
    <reaction evidence="1">
        <text>UTP + NH4(+) + ATP = CTP + ADP + phosphate + 2 H(+)</text>
        <dbReference type="Rhea" id="RHEA:16597"/>
        <dbReference type="ChEBI" id="CHEBI:15378"/>
        <dbReference type="ChEBI" id="CHEBI:28938"/>
        <dbReference type="ChEBI" id="CHEBI:30616"/>
        <dbReference type="ChEBI" id="CHEBI:37563"/>
        <dbReference type="ChEBI" id="CHEBI:43474"/>
        <dbReference type="ChEBI" id="CHEBI:46398"/>
        <dbReference type="ChEBI" id="CHEBI:456216"/>
    </reaction>
</comment>
<comment type="activity regulation">
    <text evidence="1">Allosterically activated by GTP, when glutamine is the substrate; GTP has no effect on the reaction when ammonia is the substrate. The allosteric effector GTP functions by stabilizing the protein conformation that binds the tetrahedral intermediate(s) formed during glutamine hydrolysis. Inhibited by the product CTP, via allosteric rather than competitive inhibition.</text>
</comment>
<comment type="pathway">
    <text evidence="1">Pyrimidine metabolism; CTP biosynthesis via de novo pathway; CTP from UDP: step 2/2.</text>
</comment>
<comment type="subunit">
    <text evidence="1">Homotetramer.</text>
</comment>
<comment type="miscellaneous">
    <text evidence="1">CTPSs have evolved a hybrid strategy for distinguishing between UTP and CTP. The overlapping regions of the product feedback inhibitory and substrate sites recognize a common feature in both compounds, the triphosphate moiety. To differentiate isosteric substrate and product pyrimidine rings, an additional pocket far from the expected kinase/ligase catalytic site, specifically recognizes the cytosine and ribose portions of the product inhibitor.</text>
</comment>
<comment type="similarity">
    <text evidence="1">Belongs to the CTP synthase family.</text>
</comment>
<dbReference type="EC" id="6.3.4.2" evidence="1"/>
<dbReference type="EMBL" id="CP000949">
    <property type="protein sequence ID" value="ACA74544.1"/>
    <property type="molecule type" value="Genomic_DNA"/>
</dbReference>
<dbReference type="SMR" id="B1JBP2"/>
<dbReference type="STRING" id="390235.PputW619_4064"/>
<dbReference type="KEGG" id="ppw:PputW619_4064"/>
<dbReference type="eggNOG" id="COG0504">
    <property type="taxonomic scope" value="Bacteria"/>
</dbReference>
<dbReference type="HOGENOM" id="CLU_011675_5_0_6"/>
<dbReference type="OrthoDB" id="9801107at2"/>
<dbReference type="UniPathway" id="UPA00159">
    <property type="reaction ID" value="UER00277"/>
</dbReference>
<dbReference type="GO" id="GO:0005829">
    <property type="term" value="C:cytosol"/>
    <property type="evidence" value="ECO:0007669"/>
    <property type="project" value="TreeGrafter"/>
</dbReference>
<dbReference type="GO" id="GO:0005524">
    <property type="term" value="F:ATP binding"/>
    <property type="evidence" value="ECO:0007669"/>
    <property type="project" value="UniProtKB-KW"/>
</dbReference>
<dbReference type="GO" id="GO:0003883">
    <property type="term" value="F:CTP synthase activity"/>
    <property type="evidence" value="ECO:0007669"/>
    <property type="project" value="UniProtKB-UniRule"/>
</dbReference>
<dbReference type="GO" id="GO:0004359">
    <property type="term" value="F:glutaminase activity"/>
    <property type="evidence" value="ECO:0007669"/>
    <property type="project" value="RHEA"/>
</dbReference>
<dbReference type="GO" id="GO:0042802">
    <property type="term" value="F:identical protein binding"/>
    <property type="evidence" value="ECO:0007669"/>
    <property type="project" value="TreeGrafter"/>
</dbReference>
<dbReference type="GO" id="GO:0046872">
    <property type="term" value="F:metal ion binding"/>
    <property type="evidence" value="ECO:0007669"/>
    <property type="project" value="UniProtKB-KW"/>
</dbReference>
<dbReference type="GO" id="GO:0044210">
    <property type="term" value="P:'de novo' CTP biosynthetic process"/>
    <property type="evidence" value="ECO:0007669"/>
    <property type="project" value="UniProtKB-UniRule"/>
</dbReference>
<dbReference type="GO" id="GO:0019856">
    <property type="term" value="P:pyrimidine nucleobase biosynthetic process"/>
    <property type="evidence" value="ECO:0007669"/>
    <property type="project" value="TreeGrafter"/>
</dbReference>
<dbReference type="CDD" id="cd03113">
    <property type="entry name" value="CTPS_N"/>
    <property type="match status" value="1"/>
</dbReference>
<dbReference type="CDD" id="cd01746">
    <property type="entry name" value="GATase1_CTP_Synthase"/>
    <property type="match status" value="1"/>
</dbReference>
<dbReference type="FunFam" id="3.40.50.300:FF:000009">
    <property type="entry name" value="CTP synthase"/>
    <property type="match status" value="1"/>
</dbReference>
<dbReference type="FunFam" id="3.40.50.880:FF:000002">
    <property type="entry name" value="CTP synthase"/>
    <property type="match status" value="1"/>
</dbReference>
<dbReference type="Gene3D" id="3.40.50.880">
    <property type="match status" value="1"/>
</dbReference>
<dbReference type="Gene3D" id="3.40.50.300">
    <property type="entry name" value="P-loop containing nucleotide triphosphate hydrolases"/>
    <property type="match status" value="1"/>
</dbReference>
<dbReference type="HAMAP" id="MF_01227">
    <property type="entry name" value="PyrG"/>
    <property type="match status" value="1"/>
</dbReference>
<dbReference type="InterPro" id="IPR029062">
    <property type="entry name" value="Class_I_gatase-like"/>
</dbReference>
<dbReference type="InterPro" id="IPR004468">
    <property type="entry name" value="CTP_synthase"/>
</dbReference>
<dbReference type="InterPro" id="IPR017456">
    <property type="entry name" value="CTP_synthase_N"/>
</dbReference>
<dbReference type="InterPro" id="IPR017926">
    <property type="entry name" value="GATASE"/>
</dbReference>
<dbReference type="InterPro" id="IPR033828">
    <property type="entry name" value="GATase1_CTP_Synthase"/>
</dbReference>
<dbReference type="InterPro" id="IPR027417">
    <property type="entry name" value="P-loop_NTPase"/>
</dbReference>
<dbReference type="NCBIfam" id="NF003792">
    <property type="entry name" value="PRK05380.1"/>
    <property type="match status" value="1"/>
</dbReference>
<dbReference type="NCBIfam" id="TIGR00337">
    <property type="entry name" value="PyrG"/>
    <property type="match status" value="1"/>
</dbReference>
<dbReference type="PANTHER" id="PTHR11550">
    <property type="entry name" value="CTP SYNTHASE"/>
    <property type="match status" value="1"/>
</dbReference>
<dbReference type="PANTHER" id="PTHR11550:SF0">
    <property type="entry name" value="CTP SYNTHASE-RELATED"/>
    <property type="match status" value="1"/>
</dbReference>
<dbReference type="Pfam" id="PF06418">
    <property type="entry name" value="CTP_synth_N"/>
    <property type="match status" value="1"/>
</dbReference>
<dbReference type="Pfam" id="PF00117">
    <property type="entry name" value="GATase"/>
    <property type="match status" value="1"/>
</dbReference>
<dbReference type="SUPFAM" id="SSF52317">
    <property type="entry name" value="Class I glutamine amidotransferase-like"/>
    <property type="match status" value="1"/>
</dbReference>
<dbReference type="SUPFAM" id="SSF52540">
    <property type="entry name" value="P-loop containing nucleoside triphosphate hydrolases"/>
    <property type="match status" value="1"/>
</dbReference>
<dbReference type="PROSITE" id="PS51273">
    <property type="entry name" value="GATASE_TYPE_1"/>
    <property type="match status" value="1"/>
</dbReference>
<gene>
    <name evidence="1" type="primary">pyrG</name>
    <name type="ordered locus">PputW619_4064</name>
</gene>
<accession>B1JBP2</accession>
<organism>
    <name type="scientific">Pseudomonas putida (strain W619)</name>
    <dbReference type="NCBI Taxonomy" id="390235"/>
    <lineage>
        <taxon>Bacteria</taxon>
        <taxon>Pseudomonadati</taxon>
        <taxon>Pseudomonadota</taxon>
        <taxon>Gammaproteobacteria</taxon>
        <taxon>Pseudomonadales</taxon>
        <taxon>Pseudomonadaceae</taxon>
        <taxon>Pseudomonas</taxon>
    </lineage>
</organism>
<sequence>MTRYIFVTGGVVSSLGKGIASASLAAILEARGLKVTMLKLDPYINVDPGTMSPFQHGEVFVTHDGAETDLDLGHYERFIRTTMTQNNNFTTGRIYEHVLRKERRGDYLGATIQVIPHITDEIKRRIIKGAGDADVALVEIGGTVGDIESQPFLEAIRQLRFEVGAKRAMLMHLTLVPYIATAGETKTKPTQHSVKELRSIGLQPDVLVCRSDHPIDSSSRRKIAQFTNVEERAVIALEDADTIYKIPGILHAQGLDDFVVERFGLQCNSADLSEWDKVVDAKLNPEHEVTIAMVGKYMELLDAYKSLIEAMSHAGITNRTKVNLRYIDSEDIENQGTSLLEGADAILVPGGFGLRGVEGKITAVQYARENKVPYLGICLGMQVAVIEFARNVMGWKDANSTEFDRNSGHPVVGLITEWADATGAVETRTEASDLGGTMRLGAQDCQLAAGSKVHDCYGKDVITERHRHRYEVNNNLLPQLVDAGLVVSGRSEDGALVEVVESKDHPWFVACQFHPEFTSTPRDGHPLFSGFVKAALAQKNKA</sequence>
<proteinExistence type="inferred from homology"/>
<name>PYRG_PSEPW</name>
<feature type="chain" id="PRO_1000139537" description="CTP synthase">
    <location>
        <begin position="1"/>
        <end position="542"/>
    </location>
</feature>
<feature type="domain" description="Glutamine amidotransferase type-1" evidence="1">
    <location>
        <begin position="290"/>
        <end position="541"/>
    </location>
</feature>
<feature type="region of interest" description="Amidoligase domain" evidence="1">
    <location>
        <begin position="1"/>
        <end position="265"/>
    </location>
</feature>
<feature type="active site" description="Nucleophile; for glutamine hydrolysis" evidence="1">
    <location>
        <position position="378"/>
    </location>
</feature>
<feature type="active site" evidence="1">
    <location>
        <position position="514"/>
    </location>
</feature>
<feature type="active site" evidence="1">
    <location>
        <position position="516"/>
    </location>
</feature>
<feature type="binding site" evidence="1">
    <location>
        <position position="13"/>
    </location>
    <ligand>
        <name>CTP</name>
        <dbReference type="ChEBI" id="CHEBI:37563"/>
        <note>allosteric inhibitor</note>
    </ligand>
</feature>
<feature type="binding site" evidence="1">
    <location>
        <position position="13"/>
    </location>
    <ligand>
        <name>UTP</name>
        <dbReference type="ChEBI" id="CHEBI:46398"/>
    </ligand>
</feature>
<feature type="binding site" evidence="1">
    <location>
        <begin position="14"/>
        <end position="19"/>
    </location>
    <ligand>
        <name>ATP</name>
        <dbReference type="ChEBI" id="CHEBI:30616"/>
    </ligand>
</feature>
<feature type="binding site" evidence="1">
    <location>
        <position position="71"/>
    </location>
    <ligand>
        <name>ATP</name>
        <dbReference type="ChEBI" id="CHEBI:30616"/>
    </ligand>
</feature>
<feature type="binding site" evidence="1">
    <location>
        <position position="71"/>
    </location>
    <ligand>
        <name>Mg(2+)</name>
        <dbReference type="ChEBI" id="CHEBI:18420"/>
    </ligand>
</feature>
<feature type="binding site" evidence="1">
    <location>
        <position position="139"/>
    </location>
    <ligand>
        <name>Mg(2+)</name>
        <dbReference type="ChEBI" id="CHEBI:18420"/>
    </ligand>
</feature>
<feature type="binding site" evidence="1">
    <location>
        <begin position="146"/>
        <end position="148"/>
    </location>
    <ligand>
        <name>CTP</name>
        <dbReference type="ChEBI" id="CHEBI:37563"/>
        <note>allosteric inhibitor</note>
    </ligand>
</feature>
<feature type="binding site" evidence="1">
    <location>
        <begin position="186"/>
        <end position="191"/>
    </location>
    <ligand>
        <name>CTP</name>
        <dbReference type="ChEBI" id="CHEBI:37563"/>
        <note>allosteric inhibitor</note>
    </ligand>
</feature>
<feature type="binding site" evidence="1">
    <location>
        <begin position="186"/>
        <end position="191"/>
    </location>
    <ligand>
        <name>UTP</name>
        <dbReference type="ChEBI" id="CHEBI:46398"/>
    </ligand>
</feature>
<feature type="binding site" evidence="1">
    <location>
        <position position="222"/>
    </location>
    <ligand>
        <name>CTP</name>
        <dbReference type="ChEBI" id="CHEBI:37563"/>
        <note>allosteric inhibitor</note>
    </ligand>
</feature>
<feature type="binding site" evidence="1">
    <location>
        <position position="222"/>
    </location>
    <ligand>
        <name>UTP</name>
        <dbReference type="ChEBI" id="CHEBI:46398"/>
    </ligand>
</feature>
<feature type="binding site" evidence="1">
    <location>
        <position position="351"/>
    </location>
    <ligand>
        <name>L-glutamine</name>
        <dbReference type="ChEBI" id="CHEBI:58359"/>
    </ligand>
</feature>
<feature type="binding site" evidence="1">
    <location>
        <begin position="379"/>
        <end position="382"/>
    </location>
    <ligand>
        <name>L-glutamine</name>
        <dbReference type="ChEBI" id="CHEBI:58359"/>
    </ligand>
</feature>
<feature type="binding site" evidence="1">
    <location>
        <position position="402"/>
    </location>
    <ligand>
        <name>L-glutamine</name>
        <dbReference type="ChEBI" id="CHEBI:58359"/>
    </ligand>
</feature>
<feature type="binding site" evidence="1">
    <location>
        <position position="469"/>
    </location>
    <ligand>
        <name>L-glutamine</name>
        <dbReference type="ChEBI" id="CHEBI:58359"/>
    </ligand>
</feature>